<comment type="catalytic activity">
    <reaction evidence="1">
        <text>tRNA(Arg) + L-arginine + ATP = L-arginyl-tRNA(Arg) + AMP + diphosphate</text>
        <dbReference type="Rhea" id="RHEA:20301"/>
        <dbReference type="Rhea" id="RHEA-COMP:9658"/>
        <dbReference type="Rhea" id="RHEA-COMP:9673"/>
        <dbReference type="ChEBI" id="CHEBI:30616"/>
        <dbReference type="ChEBI" id="CHEBI:32682"/>
        <dbReference type="ChEBI" id="CHEBI:33019"/>
        <dbReference type="ChEBI" id="CHEBI:78442"/>
        <dbReference type="ChEBI" id="CHEBI:78513"/>
        <dbReference type="ChEBI" id="CHEBI:456215"/>
        <dbReference type="EC" id="6.1.1.19"/>
    </reaction>
</comment>
<comment type="subunit">
    <text evidence="1">Monomer.</text>
</comment>
<comment type="subcellular location">
    <subcellularLocation>
        <location evidence="1">Cytoplasm</location>
    </subcellularLocation>
</comment>
<comment type="similarity">
    <text evidence="1">Belongs to the class-I aminoacyl-tRNA synthetase family.</text>
</comment>
<protein>
    <recommendedName>
        <fullName evidence="1">Arginine--tRNA ligase</fullName>
        <ecNumber evidence="1">6.1.1.19</ecNumber>
    </recommendedName>
    <alternativeName>
        <fullName evidence="1">Arginyl-tRNA synthetase</fullName>
        <shortName evidence="1">ArgRS</shortName>
    </alternativeName>
</protein>
<keyword id="KW-0030">Aminoacyl-tRNA synthetase</keyword>
<keyword id="KW-0067">ATP-binding</keyword>
<keyword id="KW-0963">Cytoplasm</keyword>
<keyword id="KW-0436">Ligase</keyword>
<keyword id="KW-0547">Nucleotide-binding</keyword>
<keyword id="KW-0648">Protein biosynthesis</keyword>
<keyword id="KW-1185">Reference proteome</keyword>
<evidence type="ECO:0000255" key="1">
    <source>
        <dbReference type="HAMAP-Rule" id="MF_00123"/>
    </source>
</evidence>
<sequence>MTPADLADAIVAAIGRAVADGDLDVTVPTTVTVERPKTAGHGDYASPVALQLAKAARRKPREVAEVLAGRLATQSGIASVDIAGPGFLNFTLAGDALGEIARTVVRAGESYGHAAKPRGVRVNLEFVSANPTGPVTLASARWAAVGDALARILTAAGFSVGGEYYVNDAGVQIERFGASVLAAAAGREIPAEGYHGAYVAEIAAAVLAGRPDLLDLPEDAALAVTTEEGLALMLTEIRSTLEGFGVHFDRWASERALHTAGALTKAIDDLRAQGHVYDADGAVWLRTTDFGDDKDRPLVKSDGQPTYFCADAAYYRDKRGRGFDQLIYLLGADHHGYVARLKAISACFGDDPATNLDVIIGQLVTLSRGGAPVKMSKRAGTFLTLHDLVDAVGVDAARYSLVRSSLDSSLDLDLDLVTRQTSDNPVFYVQYAHARISSLLRNAEALGLPTASETADVALLTHPREVDLLRGLGEFPRVIEAAASLRGPHRVARYLEELAGVYHRFYDACRVLPQGDEEAGPLTGARLLLVAATRVVLANGLGLLGVSAPERM</sequence>
<proteinExistence type="inferred from homology"/>
<feature type="chain" id="PRO_1000018028" description="Arginine--tRNA ligase">
    <location>
        <begin position="1"/>
        <end position="552"/>
    </location>
</feature>
<feature type="short sequence motif" description="'HIGH' region">
    <location>
        <begin position="129"/>
        <end position="139"/>
    </location>
</feature>
<reference key="1">
    <citation type="journal article" date="2007" name="Genome Res.">
        <title>Genome characteristics of facultatively symbiotic Frankia sp. strains reflect host range and host plant biogeography.</title>
        <authorList>
            <person name="Normand P."/>
            <person name="Lapierre P."/>
            <person name="Tisa L.S."/>
            <person name="Gogarten J.P."/>
            <person name="Alloisio N."/>
            <person name="Bagnarol E."/>
            <person name="Bassi C.A."/>
            <person name="Berry A.M."/>
            <person name="Bickhart D.M."/>
            <person name="Choisne N."/>
            <person name="Couloux A."/>
            <person name="Cournoyer B."/>
            <person name="Cruveiller S."/>
            <person name="Daubin V."/>
            <person name="Demange N."/>
            <person name="Francino M.P."/>
            <person name="Goltsman E."/>
            <person name="Huang Y."/>
            <person name="Kopp O.R."/>
            <person name="Labarre L."/>
            <person name="Lapidus A."/>
            <person name="Lavire C."/>
            <person name="Marechal J."/>
            <person name="Martinez M."/>
            <person name="Mastronunzio J.E."/>
            <person name="Mullin B.C."/>
            <person name="Niemann J."/>
            <person name="Pujic P."/>
            <person name="Rawnsley T."/>
            <person name="Rouy Z."/>
            <person name="Schenowitz C."/>
            <person name="Sellstedt A."/>
            <person name="Tavares F."/>
            <person name="Tomkins J.P."/>
            <person name="Vallenet D."/>
            <person name="Valverde C."/>
            <person name="Wall L.G."/>
            <person name="Wang Y."/>
            <person name="Medigue C."/>
            <person name="Benson D.R."/>
        </authorList>
    </citation>
    <scope>NUCLEOTIDE SEQUENCE [LARGE SCALE GENOMIC DNA]</scope>
    <source>
        <strain>DSM 45986 / CECT 9034 / ACN14a</strain>
    </source>
</reference>
<name>SYR_FRAAA</name>
<accession>Q0RD93</accession>
<gene>
    <name evidence="1" type="primary">argS</name>
    <name type="ordered locus">FRAAL5953</name>
</gene>
<organism>
    <name type="scientific">Frankia alni (strain DSM 45986 / CECT 9034 / ACN14a)</name>
    <dbReference type="NCBI Taxonomy" id="326424"/>
    <lineage>
        <taxon>Bacteria</taxon>
        <taxon>Bacillati</taxon>
        <taxon>Actinomycetota</taxon>
        <taxon>Actinomycetes</taxon>
        <taxon>Frankiales</taxon>
        <taxon>Frankiaceae</taxon>
        <taxon>Frankia</taxon>
    </lineage>
</organism>
<dbReference type="EC" id="6.1.1.19" evidence="1"/>
<dbReference type="EMBL" id="CT573213">
    <property type="protein sequence ID" value="CAJ64578.1"/>
    <property type="molecule type" value="Genomic_DNA"/>
</dbReference>
<dbReference type="RefSeq" id="WP_011607011.1">
    <property type="nucleotide sequence ID" value="NC_008278.1"/>
</dbReference>
<dbReference type="SMR" id="Q0RD93"/>
<dbReference type="STRING" id="326424.FRAAL5953"/>
<dbReference type="KEGG" id="fal:FRAAL5953"/>
<dbReference type="eggNOG" id="COG0018">
    <property type="taxonomic scope" value="Bacteria"/>
</dbReference>
<dbReference type="HOGENOM" id="CLU_006406_0_1_11"/>
<dbReference type="OrthoDB" id="9803211at2"/>
<dbReference type="Proteomes" id="UP000000657">
    <property type="component" value="Chromosome"/>
</dbReference>
<dbReference type="GO" id="GO:0005737">
    <property type="term" value="C:cytoplasm"/>
    <property type="evidence" value="ECO:0007669"/>
    <property type="project" value="UniProtKB-SubCell"/>
</dbReference>
<dbReference type="GO" id="GO:0004814">
    <property type="term" value="F:arginine-tRNA ligase activity"/>
    <property type="evidence" value="ECO:0007669"/>
    <property type="project" value="UniProtKB-UniRule"/>
</dbReference>
<dbReference type="GO" id="GO:0005524">
    <property type="term" value="F:ATP binding"/>
    <property type="evidence" value="ECO:0007669"/>
    <property type="project" value="UniProtKB-UniRule"/>
</dbReference>
<dbReference type="GO" id="GO:0006420">
    <property type="term" value="P:arginyl-tRNA aminoacylation"/>
    <property type="evidence" value="ECO:0007669"/>
    <property type="project" value="UniProtKB-UniRule"/>
</dbReference>
<dbReference type="CDD" id="cd00671">
    <property type="entry name" value="ArgRS_core"/>
    <property type="match status" value="1"/>
</dbReference>
<dbReference type="FunFam" id="1.10.730.10:FF:000008">
    <property type="entry name" value="Arginine--tRNA ligase"/>
    <property type="match status" value="1"/>
</dbReference>
<dbReference type="FunFam" id="3.40.50.620:FF:000062">
    <property type="entry name" value="Arginine--tRNA ligase"/>
    <property type="match status" value="1"/>
</dbReference>
<dbReference type="Gene3D" id="3.30.1360.70">
    <property type="entry name" value="Arginyl tRNA synthetase N-terminal domain"/>
    <property type="match status" value="1"/>
</dbReference>
<dbReference type="Gene3D" id="3.40.50.620">
    <property type="entry name" value="HUPs"/>
    <property type="match status" value="1"/>
</dbReference>
<dbReference type="Gene3D" id="1.10.730.10">
    <property type="entry name" value="Isoleucyl-tRNA Synthetase, Domain 1"/>
    <property type="match status" value="1"/>
</dbReference>
<dbReference type="HAMAP" id="MF_00123">
    <property type="entry name" value="Arg_tRNA_synth"/>
    <property type="match status" value="1"/>
</dbReference>
<dbReference type="InterPro" id="IPR001278">
    <property type="entry name" value="Arg-tRNA-ligase"/>
</dbReference>
<dbReference type="InterPro" id="IPR005148">
    <property type="entry name" value="Arg-tRNA-synth_N"/>
</dbReference>
<dbReference type="InterPro" id="IPR036695">
    <property type="entry name" value="Arg-tRNA-synth_N_sf"/>
</dbReference>
<dbReference type="InterPro" id="IPR035684">
    <property type="entry name" value="ArgRS_core"/>
</dbReference>
<dbReference type="InterPro" id="IPR008909">
    <property type="entry name" value="DALR_anticod-bd"/>
</dbReference>
<dbReference type="InterPro" id="IPR014729">
    <property type="entry name" value="Rossmann-like_a/b/a_fold"/>
</dbReference>
<dbReference type="InterPro" id="IPR009080">
    <property type="entry name" value="tRNAsynth_Ia_anticodon-bd"/>
</dbReference>
<dbReference type="NCBIfam" id="TIGR00456">
    <property type="entry name" value="argS"/>
    <property type="match status" value="1"/>
</dbReference>
<dbReference type="PANTHER" id="PTHR11956:SF5">
    <property type="entry name" value="ARGININE--TRNA LIGASE, CYTOPLASMIC"/>
    <property type="match status" value="1"/>
</dbReference>
<dbReference type="PANTHER" id="PTHR11956">
    <property type="entry name" value="ARGINYL-TRNA SYNTHETASE"/>
    <property type="match status" value="1"/>
</dbReference>
<dbReference type="Pfam" id="PF03485">
    <property type="entry name" value="Arg_tRNA_synt_N"/>
    <property type="match status" value="1"/>
</dbReference>
<dbReference type="Pfam" id="PF05746">
    <property type="entry name" value="DALR_1"/>
    <property type="match status" value="1"/>
</dbReference>
<dbReference type="Pfam" id="PF00750">
    <property type="entry name" value="tRNA-synt_1d"/>
    <property type="match status" value="1"/>
</dbReference>
<dbReference type="PRINTS" id="PR01038">
    <property type="entry name" value="TRNASYNTHARG"/>
</dbReference>
<dbReference type="SMART" id="SM01016">
    <property type="entry name" value="Arg_tRNA_synt_N"/>
    <property type="match status" value="1"/>
</dbReference>
<dbReference type="SMART" id="SM00836">
    <property type="entry name" value="DALR_1"/>
    <property type="match status" value="1"/>
</dbReference>
<dbReference type="SUPFAM" id="SSF47323">
    <property type="entry name" value="Anticodon-binding domain of a subclass of class I aminoacyl-tRNA synthetases"/>
    <property type="match status" value="1"/>
</dbReference>
<dbReference type="SUPFAM" id="SSF55190">
    <property type="entry name" value="Arginyl-tRNA synthetase (ArgRS), N-terminal 'additional' domain"/>
    <property type="match status" value="1"/>
</dbReference>
<dbReference type="SUPFAM" id="SSF52374">
    <property type="entry name" value="Nucleotidylyl transferase"/>
    <property type="match status" value="1"/>
</dbReference>